<gene>
    <name type="primary">aguA</name>
    <name type="ORF">NFIA_072510</name>
</gene>
<reference key="1">
    <citation type="journal article" date="2008" name="PLoS Genet.">
        <title>Genomic islands in the pathogenic filamentous fungus Aspergillus fumigatus.</title>
        <authorList>
            <person name="Fedorova N.D."/>
            <person name="Khaldi N."/>
            <person name="Joardar V.S."/>
            <person name="Maiti R."/>
            <person name="Amedeo P."/>
            <person name="Anderson M.J."/>
            <person name="Crabtree J."/>
            <person name="Silva J.C."/>
            <person name="Badger J.H."/>
            <person name="Albarraq A."/>
            <person name="Angiuoli S."/>
            <person name="Bussey H."/>
            <person name="Bowyer P."/>
            <person name="Cotty P.J."/>
            <person name="Dyer P.S."/>
            <person name="Egan A."/>
            <person name="Galens K."/>
            <person name="Fraser-Liggett C.M."/>
            <person name="Haas B.J."/>
            <person name="Inman J.M."/>
            <person name="Kent R."/>
            <person name="Lemieux S."/>
            <person name="Malavazi I."/>
            <person name="Orvis J."/>
            <person name="Roemer T."/>
            <person name="Ronning C.M."/>
            <person name="Sundaram J.P."/>
            <person name="Sutton G."/>
            <person name="Turner G."/>
            <person name="Venter J.C."/>
            <person name="White O.R."/>
            <person name="Whitty B.R."/>
            <person name="Youngman P."/>
            <person name="Wolfe K.H."/>
            <person name="Goldman G.H."/>
            <person name="Wortman J.R."/>
            <person name="Jiang B."/>
            <person name="Denning D.W."/>
            <person name="Nierman W.C."/>
        </authorList>
    </citation>
    <scope>NUCLEOTIDE SEQUENCE [LARGE SCALE GENOMIC DNA]</scope>
    <source>
        <strain>ATCC 1020 / DSM 3700 / CBS 544.65 / FGSC A1164 / JCM 1740 / NRRL 181 / WB 181</strain>
    </source>
</reference>
<feature type="signal peptide" evidence="2">
    <location>
        <begin position="1"/>
        <end position="19"/>
    </location>
</feature>
<feature type="chain" id="PRO_0000393492" description="Probable alpha-glucuronidase A">
    <location>
        <begin position="20"/>
        <end position="840"/>
    </location>
</feature>
<feature type="glycosylation site" description="N-linked (GlcNAc...) asparagine" evidence="2">
    <location>
        <position position="50"/>
    </location>
</feature>
<feature type="glycosylation site" description="N-linked (GlcNAc...) asparagine" evidence="2">
    <location>
        <position position="149"/>
    </location>
</feature>
<feature type="glycosylation site" description="N-linked (GlcNAc...) asparagine" evidence="2">
    <location>
        <position position="222"/>
    </location>
</feature>
<feature type="glycosylation site" description="N-linked (GlcNAc...) asparagine" evidence="2">
    <location>
        <position position="262"/>
    </location>
</feature>
<feature type="glycosylation site" description="N-linked (GlcNAc...) asparagine" evidence="2">
    <location>
        <position position="279"/>
    </location>
</feature>
<feature type="glycosylation site" description="N-linked (GlcNAc...) asparagine" evidence="2">
    <location>
        <position position="310"/>
    </location>
</feature>
<feature type="glycosylation site" description="N-linked (GlcNAc...) asparagine" evidence="2">
    <location>
        <position position="465"/>
    </location>
</feature>
<feature type="glycosylation site" description="N-linked (GlcNAc...) asparagine" evidence="2">
    <location>
        <position position="527"/>
    </location>
</feature>
<feature type="glycosylation site" description="N-linked (GlcNAc...) asparagine" evidence="2">
    <location>
        <position position="576"/>
    </location>
</feature>
<feature type="glycosylation site" description="N-linked (GlcNAc...) asparagine" evidence="2">
    <location>
        <position position="610"/>
    </location>
</feature>
<feature type="glycosylation site" description="N-linked (GlcNAc...) asparagine" evidence="2">
    <location>
        <position position="682"/>
    </location>
</feature>
<feature type="glycosylation site" description="N-linked (GlcNAc...) asparagine" evidence="2">
    <location>
        <position position="723"/>
    </location>
</feature>
<feature type="glycosylation site" description="N-linked (GlcNAc...) asparagine" evidence="2">
    <location>
        <position position="732"/>
    </location>
</feature>
<dbReference type="EC" id="3.2.1.139"/>
<dbReference type="EMBL" id="DS027696">
    <property type="protein sequence ID" value="EAW17337.1"/>
    <property type="molecule type" value="Genomic_DNA"/>
</dbReference>
<dbReference type="RefSeq" id="XP_001259234.1">
    <property type="nucleotide sequence ID" value="XM_001259233.1"/>
</dbReference>
<dbReference type="SMR" id="A1DD80"/>
<dbReference type="STRING" id="331117.A1DD80"/>
<dbReference type="GlyCosmos" id="A1DD80">
    <property type="glycosylation" value="13 sites, No reported glycans"/>
</dbReference>
<dbReference type="EnsemblFungi" id="EAW17337">
    <property type="protein sequence ID" value="EAW17337"/>
    <property type="gene ID" value="NFIA_072510"/>
</dbReference>
<dbReference type="GeneID" id="4586107"/>
<dbReference type="KEGG" id="nfi:NFIA_072510"/>
<dbReference type="VEuPathDB" id="FungiDB:NFIA_072510"/>
<dbReference type="eggNOG" id="ENOG502QWS4">
    <property type="taxonomic scope" value="Eukaryota"/>
</dbReference>
<dbReference type="HOGENOM" id="CLU_007125_2_0_1"/>
<dbReference type="OMA" id="IWRAFVY"/>
<dbReference type="OrthoDB" id="6501611at2759"/>
<dbReference type="Proteomes" id="UP000006702">
    <property type="component" value="Unassembled WGS sequence"/>
</dbReference>
<dbReference type="GO" id="GO:0005576">
    <property type="term" value="C:extracellular region"/>
    <property type="evidence" value="ECO:0007669"/>
    <property type="project" value="UniProtKB-SubCell"/>
</dbReference>
<dbReference type="GO" id="GO:0046559">
    <property type="term" value="F:alpha-glucuronidase activity"/>
    <property type="evidence" value="ECO:0007669"/>
    <property type="project" value="UniProtKB-EC"/>
</dbReference>
<dbReference type="GO" id="GO:0045493">
    <property type="term" value="P:xylan catabolic process"/>
    <property type="evidence" value="ECO:0007669"/>
    <property type="project" value="UniProtKB-KW"/>
</dbReference>
<dbReference type="CDD" id="cd02795">
    <property type="entry name" value="CBM6-CBM35-CBM36_like"/>
    <property type="match status" value="1"/>
</dbReference>
<dbReference type="FunFam" id="3.30.379.10:FF:000007">
    <property type="entry name" value="Alpha-glucuronidase A"/>
    <property type="match status" value="1"/>
</dbReference>
<dbReference type="FunFam" id="3.20.20.80:FF:000096">
    <property type="entry name" value="Xylan alpha-1,2-glucuronidase"/>
    <property type="match status" value="1"/>
</dbReference>
<dbReference type="FunFam" id="3.90.1330.10:FF:000001">
    <property type="entry name" value="Xylan alpha-1,2-glucuronidase"/>
    <property type="match status" value="1"/>
</dbReference>
<dbReference type="Gene3D" id="3.90.1330.10">
    <property type="entry name" value="Alpha-glucuronidase, C-terminal domain"/>
    <property type="match status" value="1"/>
</dbReference>
<dbReference type="Gene3D" id="3.30.379.10">
    <property type="entry name" value="Chitobiase/beta-hexosaminidase domain 2-like"/>
    <property type="match status" value="1"/>
</dbReference>
<dbReference type="Gene3D" id="3.20.20.80">
    <property type="entry name" value="Glycosidases"/>
    <property type="match status" value="1"/>
</dbReference>
<dbReference type="InterPro" id="IPR037054">
    <property type="entry name" value="A-glucoronidase_C_sf"/>
</dbReference>
<dbReference type="InterPro" id="IPR011395">
    <property type="entry name" value="Glyco_hydro_67_aGlcAse"/>
</dbReference>
<dbReference type="InterPro" id="IPR005154">
    <property type="entry name" value="Glyco_hydro_67_aGlcAse_N"/>
</dbReference>
<dbReference type="InterPro" id="IPR011099">
    <property type="entry name" value="Glyco_hydro_67_C"/>
</dbReference>
<dbReference type="InterPro" id="IPR011100">
    <property type="entry name" value="Glyco_hydro_67_cat"/>
</dbReference>
<dbReference type="InterPro" id="IPR017853">
    <property type="entry name" value="Glycoside_hydrolase_SF"/>
</dbReference>
<dbReference type="InterPro" id="IPR029018">
    <property type="entry name" value="Hex-like_dom2"/>
</dbReference>
<dbReference type="PANTHER" id="PTHR39207">
    <property type="entry name" value="ALPHA-GLUCURONIDASE A"/>
    <property type="match status" value="1"/>
</dbReference>
<dbReference type="PANTHER" id="PTHR39207:SF1">
    <property type="entry name" value="ALPHA-GLUCURONIDASE A"/>
    <property type="match status" value="1"/>
</dbReference>
<dbReference type="Pfam" id="PF07477">
    <property type="entry name" value="Glyco_hydro_67C"/>
    <property type="match status" value="1"/>
</dbReference>
<dbReference type="Pfam" id="PF07488">
    <property type="entry name" value="Glyco_hydro_67M"/>
    <property type="match status" value="1"/>
</dbReference>
<dbReference type="Pfam" id="PF03648">
    <property type="entry name" value="Glyco_hydro_67N"/>
    <property type="match status" value="1"/>
</dbReference>
<dbReference type="PIRSF" id="PIRSF029900">
    <property type="entry name" value="Alpha-glucuronds"/>
    <property type="match status" value="1"/>
</dbReference>
<dbReference type="SUPFAM" id="SSF51445">
    <property type="entry name" value="(Trans)glycosidases"/>
    <property type="match status" value="1"/>
</dbReference>
<dbReference type="SUPFAM" id="SSF55545">
    <property type="entry name" value="beta-N-acetylhexosaminidase-like domain"/>
    <property type="match status" value="1"/>
</dbReference>
<organism>
    <name type="scientific">Neosartorya fischeri (strain ATCC 1020 / DSM 3700 / CBS 544.65 / FGSC A1164 / JCM 1740 / NRRL 181 / WB 181)</name>
    <name type="common">Aspergillus fischerianus</name>
    <dbReference type="NCBI Taxonomy" id="331117"/>
    <lineage>
        <taxon>Eukaryota</taxon>
        <taxon>Fungi</taxon>
        <taxon>Dikarya</taxon>
        <taxon>Ascomycota</taxon>
        <taxon>Pezizomycotina</taxon>
        <taxon>Eurotiomycetes</taxon>
        <taxon>Eurotiomycetidae</taxon>
        <taxon>Eurotiales</taxon>
        <taxon>Aspergillaceae</taxon>
        <taxon>Aspergillus</taxon>
        <taxon>Aspergillus subgen. Fumigati</taxon>
    </lineage>
</organism>
<sequence length="840" mass="93580">MWSGIPVFALLSSIGIAAAENGLDGWLRYASVPCNGNCQRALPSHIVTLNSTKSSQVYVAGQELQDGLHQILGKHASVKSTGCSTDSSIVVGTVEAYRQVCNTGSQAPELDVDGFWLSIRGKSVQIVGQTERGALYGAYEYLSMLAQGNFSQVSYATSPHAPIRWVNQWDNMDGSIERGYGGPSIFFKDGVIPQDLSRVKQYARLLASVRINGIVVNNVNANASLLMPSNMDGLARIADVFRPYGIRVGISLNFASPSTLGNLSTYDPFDSSVIAWWGNVTDQLYARIPDMAGYLVKANSEGQPGPTTYNRTLADGANMFARALKPHGGVVMFRAFVYDHHISEDNWYNDRANAAVDFFKPLDGKFDDNVVVQIKYGPIDFQVREPASPLFANLYKTNTAIELQVTQEYLGQQSHLVYLPPLWQTILRFDLRVDQKPSPVRDIISGQRFDRPLGGWAAVVNVGTNTTWLGSHLAMSNLYAYGRLAWEPTLDSEDIVQDWIRLTFGLDRRVLDTLTQMSMESWPAYENYSGNLGIQTLTDILYTHYGPNPASQDGNGWGQWTRADHLSIGMDRTVKNGTKFSGQYPAEVAAMYENIETTPDNLMLWFHHVNYTQRLHSGKTVIQHFYDAHYDGAETAQTFVSRWESLRERIDAERYQHVLARLIYQAGHSIVWRDAINNFYRNLSGIADEKERVGYHPWRVEAEDMQLDGYVPYAVSPFETASNFTAIVTASNGTTGTASATLDFKTGTYDLGINYYDMYGGKSHWTVYLNDRVVGQWQGNSEDVLSHTPSIYLDGHSATRITFRDVKIHKGDRLKIVGEPDGVEPAPLDYAVVLPRGIVD</sequence>
<proteinExistence type="inferred from homology"/>
<evidence type="ECO:0000250" key="1"/>
<evidence type="ECO:0000255" key="2"/>
<evidence type="ECO:0000305" key="3"/>
<comment type="function">
    <text evidence="1">Alpha-glucuronidase involved in the hydrolysis of xylan, a major structural heterogeneous polysaccharide found in plant biomass representing the second most abundant polysaccharide in the biosphere, after cellulose. Releases 4-O-methylglucuronic acid from xylan (By similarity).</text>
</comment>
<comment type="catalytic activity">
    <reaction>
        <text>an alpha-D-glucuronoside + H2O = D-glucuronate + an alcohol</text>
        <dbReference type="Rhea" id="RHEA:20005"/>
        <dbReference type="ChEBI" id="CHEBI:15377"/>
        <dbReference type="ChEBI" id="CHEBI:30879"/>
        <dbReference type="ChEBI" id="CHEBI:58720"/>
        <dbReference type="ChEBI" id="CHEBI:58899"/>
        <dbReference type="EC" id="3.2.1.139"/>
    </reaction>
</comment>
<comment type="subcellular location">
    <subcellularLocation>
        <location evidence="1">Secreted</location>
    </subcellularLocation>
</comment>
<comment type="similarity">
    <text evidence="3">Belongs to the glycosyl hydrolase 67 family.</text>
</comment>
<name>AGUA_NEOFI</name>
<protein>
    <recommendedName>
        <fullName>Probable alpha-glucuronidase A</fullName>
        <ecNumber>3.2.1.139</ecNumber>
    </recommendedName>
    <alternativeName>
        <fullName>Alpha-glucosiduronase A</fullName>
    </alternativeName>
</protein>
<accession>A1DD80</accession>
<keyword id="KW-0119">Carbohydrate metabolism</keyword>
<keyword id="KW-0325">Glycoprotein</keyword>
<keyword id="KW-0326">Glycosidase</keyword>
<keyword id="KW-0378">Hydrolase</keyword>
<keyword id="KW-0624">Polysaccharide degradation</keyword>
<keyword id="KW-1185">Reference proteome</keyword>
<keyword id="KW-0964">Secreted</keyword>
<keyword id="KW-0732">Signal</keyword>
<keyword id="KW-0858">Xylan degradation</keyword>